<name>RL20_TOLAT</name>
<organism>
    <name type="scientific">Tolumonas auensis (strain DSM 9187 / NBRC 110442 / TA 4)</name>
    <dbReference type="NCBI Taxonomy" id="595494"/>
    <lineage>
        <taxon>Bacteria</taxon>
        <taxon>Pseudomonadati</taxon>
        <taxon>Pseudomonadota</taxon>
        <taxon>Gammaproteobacteria</taxon>
        <taxon>Aeromonadales</taxon>
        <taxon>Aeromonadaceae</taxon>
        <taxon>Tolumonas</taxon>
    </lineage>
</organism>
<dbReference type="EMBL" id="CP001616">
    <property type="protein sequence ID" value="ACQ93337.1"/>
    <property type="molecule type" value="Genomic_DNA"/>
</dbReference>
<dbReference type="RefSeq" id="WP_015878808.1">
    <property type="nucleotide sequence ID" value="NC_012691.1"/>
</dbReference>
<dbReference type="SMR" id="C4LFH0"/>
<dbReference type="STRING" id="595494.Tola_1727"/>
<dbReference type="KEGG" id="tau:Tola_1727"/>
<dbReference type="eggNOG" id="COG0292">
    <property type="taxonomic scope" value="Bacteria"/>
</dbReference>
<dbReference type="HOGENOM" id="CLU_123265_0_1_6"/>
<dbReference type="OrthoDB" id="9808966at2"/>
<dbReference type="Proteomes" id="UP000009073">
    <property type="component" value="Chromosome"/>
</dbReference>
<dbReference type="GO" id="GO:1990904">
    <property type="term" value="C:ribonucleoprotein complex"/>
    <property type="evidence" value="ECO:0007669"/>
    <property type="project" value="UniProtKB-KW"/>
</dbReference>
<dbReference type="GO" id="GO:0005840">
    <property type="term" value="C:ribosome"/>
    <property type="evidence" value="ECO:0007669"/>
    <property type="project" value="UniProtKB-KW"/>
</dbReference>
<dbReference type="GO" id="GO:0019843">
    <property type="term" value="F:rRNA binding"/>
    <property type="evidence" value="ECO:0007669"/>
    <property type="project" value="UniProtKB-UniRule"/>
</dbReference>
<dbReference type="GO" id="GO:0003735">
    <property type="term" value="F:structural constituent of ribosome"/>
    <property type="evidence" value="ECO:0007669"/>
    <property type="project" value="InterPro"/>
</dbReference>
<dbReference type="GO" id="GO:0000027">
    <property type="term" value="P:ribosomal large subunit assembly"/>
    <property type="evidence" value="ECO:0007669"/>
    <property type="project" value="UniProtKB-UniRule"/>
</dbReference>
<dbReference type="GO" id="GO:0006412">
    <property type="term" value="P:translation"/>
    <property type="evidence" value="ECO:0007669"/>
    <property type="project" value="InterPro"/>
</dbReference>
<dbReference type="CDD" id="cd07026">
    <property type="entry name" value="Ribosomal_L20"/>
    <property type="match status" value="1"/>
</dbReference>
<dbReference type="FunFam" id="1.10.1900.20:FF:000001">
    <property type="entry name" value="50S ribosomal protein L20"/>
    <property type="match status" value="1"/>
</dbReference>
<dbReference type="Gene3D" id="6.10.160.10">
    <property type="match status" value="1"/>
</dbReference>
<dbReference type="Gene3D" id="1.10.1900.20">
    <property type="entry name" value="Ribosomal protein L20"/>
    <property type="match status" value="1"/>
</dbReference>
<dbReference type="HAMAP" id="MF_00382">
    <property type="entry name" value="Ribosomal_bL20"/>
    <property type="match status" value="1"/>
</dbReference>
<dbReference type="InterPro" id="IPR005813">
    <property type="entry name" value="Ribosomal_bL20"/>
</dbReference>
<dbReference type="InterPro" id="IPR049946">
    <property type="entry name" value="RIBOSOMAL_L20_CS"/>
</dbReference>
<dbReference type="InterPro" id="IPR035566">
    <property type="entry name" value="Ribosomal_protein_bL20_C"/>
</dbReference>
<dbReference type="NCBIfam" id="TIGR01032">
    <property type="entry name" value="rplT_bact"/>
    <property type="match status" value="1"/>
</dbReference>
<dbReference type="PANTHER" id="PTHR10986">
    <property type="entry name" value="39S RIBOSOMAL PROTEIN L20"/>
    <property type="match status" value="1"/>
</dbReference>
<dbReference type="Pfam" id="PF00453">
    <property type="entry name" value="Ribosomal_L20"/>
    <property type="match status" value="1"/>
</dbReference>
<dbReference type="PRINTS" id="PR00062">
    <property type="entry name" value="RIBOSOMALL20"/>
</dbReference>
<dbReference type="SUPFAM" id="SSF74731">
    <property type="entry name" value="Ribosomal protein L20"/>
    <property type="match status" value="1"/>
</dbReference>
<dbReference type="PROSITE" id="PS00937">
    <property type="entry name" value="RIBOSOMAL_L20"/>
    <property type="match status" value="1"/>
</dbReference>
<keyword id="KW-1185">Reference proteome</keyword>
<keyword id="KW-0687">Ribonucleoprotein</keyword>
<keyword id="KW-0689">Ribosomal protein</keyword>
<keyword id="KW-0694">RNA-binding</keyword>
<keyword id="KW-0699">rRNA-binding</keyword>
<protein>
    <recommendedName>
        <fullName evidence="1">Large ribosomal subunit protein bL20</fullName>
    </recommendedName>
    <alternativeName>
        <fullName evidence="2">50S ribosomal protein L20</fullName>
    </alternativeName>
</protein>
<proteinExistence type="inferred from homology"/>
<gene>
    <name evidence="1" type="primary">rplT</name>
    <name type="ordered locus">Tola_1727</name>
</gene>
<accession>C4LFH0</accession>
<comment type="function">
    <text evidence="1">Binds directly to 23S ribosomal RNA and is necessary for the in vitro assembly process of the 50S ribosomal subunit. It is not involved in the protein synthesizing functions of that subunit.</text>
</comment>
<comment type="similarity">
    <text evidence="1">Belongs to the bacterial ribosomal protein bL20 family.</text>
</comment>
<sequence length="118" mass="13415">MPRVKRGVTARARHKKVLNAAKGYYGARSRIYRVAVQAVTKAGQYAYRDRRQKKRQFRQLWIVRINAAARLNGLSYSRFINGLKKASIEIDRKILSDIAVHDKATFTALVEKAKAALA</sequence>
<evidence type="ECO:0000255" key="1">
    <source>
        <dbReference type="HAMAP-Rule" id="MF_00382"/>
    </source>
</evidence>
<evidence type="ECO:0000305" key="2"/>
<reference key="1">
    <citation type="submission" date="2009-05" db="EMBL/GenBank/DDBJ databases">
        <title>Complete sequence of Tolumonas auensis DSM 9187.</title>
        <authorList>
            <consortium name="US DOE Joint Genome Institute"/>
            <person name="Lucas S."/>
            <person name="Copeland A."/>
            <person name="Lapidus A."/>
            <person name="Glavina del Rio T."/>
            <person name="Tice H."/>
            <person name="Bruce D."/>
            <person name="Goodwin L."/>
            <person name="Pitluck S."/>
            <person name="Chertkov O."/>
            <person name="Brettin T."/>
            <person name="Detter J.C."/>
            <person name="Han C."/>
            <person name="Larimer F."/>
            <person name="Land M."/>
            <person name="Hauser L."/>
            <person name="Kyrpides N."/>
            <person name="Mikhailova N."/>
            <person name="Spring S."/>
            <person name="Beller H."/>
        </authorList>
    </citation>
    <scope>NUCLEOTIDE SEQUENCE [LARGE SCALE GENOMIC DNA]</scope>
    <source>
        <strain>DSM 9187 / NBRC 110442 / TA 4</strain>
    </source>
</reference>
<feature type="chain" id="PRO_1000205729" description="Large ribosomal subunit protein bL20">
    <location>
        <begin position="1"/>
        <end position="118"/>
    </location>
</feature>